<organismHost>
    <name type="scientific">Pseudomonas aeruginosa</name>
    <dbReference type="NCBI Taxonomy" id="287"/>
</organismHost>
<name>SPAN1_BPKMV</name>
<organism>
    <name type="scientific">Pseudomonas phage phiKMV</name>
    <dbReference type="NCBI Taxonomy" id="204270"/>
    <lineage>
        <taxon>Viruses</taxon>
        <taxon>Duplodnaviria</taxon>
        <taxon>Heunggongvirae</taxon>
        <taxon>Uroviricota</taxon>
        <taxon>Caudoviricetes</taxon>
        <taxon>Autographiviridae</taxon>
        <taxon>Krylovirinae</taxon>
        <taxon>Phikmvvirus</taxon>
        <taxon>Phikmvvirus phiKMV</taxon>
    </lineage>
</organism>
<protein>
    <recommendedName>
        <fullName>Probable spanin, inner membrane subunit</fullName>
        <shortName>i-spanin</shortName>
    </recommendedName>
</protein>
<proteinExistence type="inferred from homology"/>
<evidence type="ECO:0000250" key="1"/>
<evidence type="ECO:0000255" key="2"/>
<accession>Q7Y2B9</accession>
<reference key="1">
    <citation type="journal article" date="2003" name="Virology">
        <title>The genome of bacteriophage phiKMV, a T7-like virus infecting Pseudomonas aeruginosa.</title>
        <authorList>
            <person name="Lavigne R."/>
            <person name="Burkal'tseva M.V."/>
            <person name="Robben J."/>
            <person name="Sykilinda N.N."/>
            <person name="Kurochkina L.P."/>
            <person name="Grymonprez B."/>
            <person name="Jonckx B."/>
            <person name="Krylov V.N."/>
            <person name="Mesyanzhinov V.V."/>
            <person name="Volckaert G."/>
        </authorList>
    </citation>
    <scope>NUCLEOTIDE SEQUENCE [GENOMIC DNA]</scope>
</reference>
<reference key="2">
    <citation type="journal article" date="2004" name="Cell. Mol. Life Sci.">
        <title>Identification and characterization of a highly thermostable bacteriophage lysozyme.</title>
        <authorList>
            <person name="Lavigne R."/>
            <person name="Briers Y."/>
            <person name="Hertveldt K."/>
            <person name="Robben J."/>
            <person name="Volckaert G."/>
        </authorList>
    </citation>
    <scope>NUCLEOTIDE SEQUENCE [LARGE SCALE GENOMIC DNA]</scope>
</reference>
<reference key="3">
    <citation type="journal article" date="2005" name="Protein Pept. Lett.">
        <title>Characterization of the bacteriophage PhiKMV DNA ligase.</title>
        <authorList>
            <person name="Lavigne R."/>
            <person name="Roucourt B."/>
            <person name="Hertveldt K."/>
            <person name="Volckaert G."/>
        </authorList>
    </citation>
    <scope>NUCLEOTIDE SEQUENCE [LARGE SCALE GENOMIC DNA]</scope>
</reference>
<feature type="chain" id="PRO_0000429260" description="Probable spanin, inner membrane subunit">
    <location>
        <begin position="1"/>
        <end position="109"/>
    </location>
</feature>
<feature type="transmembrane region" description="Helical; Signal-anchor for type II membrane protein" evidence="2">
    <location>
        <begin position="1"/>
        <end position="17"/>
    </location>
</feature>
<feature type="coiled-coil region" evidence="2">
    <location>
        <begin position="27"/>
        <end position="63"/>
    </location>
</feature>
<comment type="function">
    <text evidence="1">Component of the spanin complex that disrupts the host outer membrane and participates in cell lysis during virus exit. The spanin complex conducts the final step in host lysis by disrupting the outer membrane after holin and endolysin action have permeabilized the inner membrane and degraded the host peptidoglycans. Host outer membrane disruption is possibly due to local fusion between the inner and outer membrane performed by the spanin complex (By similarity).</text>
</comment>
<comment type="subunit">
    <text evidence="1">Interacts (via C-terminus) with the spanin outer lipoprotein subunit (via C-terminus). Part of the spanin complex which spans the entire periplasmic space. The spanin complex is composed of spanin inner membrane subunit and spanin outer membrane subunit (By similarity).</text>
</comment>
<comment type="subcellular location">
    <subcellularLocation>
        <location evidence="1">Host cell inner membrane</location>
        <topology evidence="1">Single-pass type II membrane protein</topology>
        <orientation evidence="1">Periplasmic side</orientation>
    </subcellularLocation>
</comment>
<keyword id="KW-0175">Coiled coil</keyword>
<keyword id="KW-0204">Cytolysis</keyword>
<keyword id="KW-1030">Host cell inner membrane</keyword>
<keyword id="KW-0578">Host cell lysis by virus</keyword>
<keyword id="KW-1032">Host cell membrane</keyword>
<keyword id="KW-1043">Host membrane</keyword>
<keyword id="KW-0472">Membrane</keyword>
<keyword id="KW-1185">Reference proteome</keyword>
<keyword id="KW-0735">Signal-anchor</keyword>
<keyword id="KW-0812">Transmembrane</keyword>
<keyword id="KW-1133">Transmembrane helix</keyword>
<keyword id="KW-1188">Viral release from host cell</keyword>
<dbReference type="EMBL" id="AJ505558">
    <property type="protein sequence ID" value="CAD44237.1"/>
    <property type="molecule type" value="Genomic_DNA"/>
</dbReference>
<dbReference type="RefSeq" id="NP_877485.1">
    <property type="nucleotide sequence ID" value="NC_005045.1"/>
</dbReference>
<dbReference type="SMR" id="Q7Y2B9"/>
<dbReference type="TCDB" id="1.M.1.3.1">
    <property type="family name" value="the rz/rz1 spanin1 (rz(1)) family"/>
</dbReference>
<dbReference type="KEGG" id="vg:2641783"/>
<dbReference type="OrthoDB" id="18367at10239"/>
<dbReference type="Proteomes" id="UP000000842">
    <property type="component" value="Genome"/>
</dbReference>
<dbReference type="GO" id="GO:0020002">
    <property type="term" value="C:host cell plasma membrane"/>
    <property type="evidence" value="ECO:0007669"/>
    <property type="project" value="UniProtKB-SubCell"/>
</dbReference>
<dbReference type="GO" id="GO:0016020">
    <property type="term" value="C:membrane"/>
    <property type="evidence" value="ECO:0007669"/>
    <property type="project" value="UniProtKB-KW"/>
</dbReference>
<dbReference type="GO" id="GO:0031640">
    <property type="term" value="P:killing of cells of another organism"/>
    <property type="evidence" value="ECO:0007669"/>
    <property type="project" value="UniProtKB-KW"/>
</dbReference>
<sequence>MPRTIVAILVLAVVALGASYGFVQSYRALGIAQGEIKRQTARAEALEVRYATLQRHVKEVAARTNTQRQEVDRALDQNRPWADRPVPAAVVDSLCNRPGARCAVRTPTD</sequence>
<gene>
    <name type="ORF">46</name>
</gene>